<organism>
    <name type="scientific">Picrophilus torridus (strain ATCC 700027 / DSM 9790 / JCM 10055 / NBRC 100828 / KAW 2/3)</name>
    <dbReference type="NCBI Taxonomy" id="1122961"/>
    <lineage>
        <taxon>Archaea</taxon>
        <taxon>Methanobacteriati</taxon>
        <taxon>Thermoplasmatota</taxon>
        <taxon>Thermoplasmata</taxon>
        <taxon>Thermoplasmatales</taxon>
        <taxon>Picrophilaceae</taxon>
        <taxon>Picrophilus</taxon>
    </lineage>
</organism>
<accession>Q6L277</accession>
<keyword id="KW-0028">Amino-acid biosynthesis</keyword>
<keyword id="KW-0057">Aromatic amino acid biosynthesis</keyword>
<keyword id="KW-0210">Decarboxylase</keyword>
<keyword id="KW-0456">Lyase</keyword>
<keyword id="KW-0822">Tryptophan biosynthesis</keyword>
<reference key="1">
    <citation type="journal article" date="2004" name="Proc. Natl. Acad. Sci. U.S.A.">
        <title>Genome sequence of Picrophilus torridus and its implications for life around pH 0.</title>
        <authorList>
            <person name="Fuetterer O."/>
            <person name="Angelov A."/>
            <person name="Liesegang H."/>
            <person name="Gottschalk G."/>
            <person name="Schleper C."/>
            <person name="Schepers B."/>
            <person name="Dock C."/>
            <person name="Antranikian G."/>
            <person name="Liebl W."/>
        </authorList>
    </citation>
    <scope>NUCLEOTIDE SEQUENCE [LARGE SCALE GENOMIC DNA]</scope>
    <source>
        <strain>ATCC 700027 / DSM 9790 / JCM 10055 / NBRC 100828 / KAW 2/3</strain>
    </source>
</reference>
<dbReference type="EC" id="4.1.1.48" evidence="1"/>
<dbReference type="EMBL" id="AE017261">
    <property type="protein sequence ID" value="AAT42925.1"/>
    <property type="molecule type" value="Genomic_DNA"/>
</dbReference>
<dbReference type="RefSeq" id="WP_011177141.1">
    <property type="nucleotide sequence ID" value="NC_005877.1"/>
</dbReference>
<dbReference type="SMR" id="Q6L277"/>
<dbReference type="FunCoup" id="Q6L277">
    <property type="interactions" value="103"/>
</dbReference>
<dbReference type="STRING" id="263820.PTO0340"/>
<dbReference type="PaxDb" id="263820-PTO0340"/>
<dbReference type="GeneID" id="2844852"/>
<dbReference type="KEGG" id="pto:PTO0340"/>
<dbReference type="PATRIC" id="fig|263820.9.peg.362"/>
<dbReference type="eggNOG" id="arCOG01088">
    <property type="taxonomic scope" value="Archaea"/>
</dbReference>
<dbReference type="HOGENOM" id="CLU_034247_2_0_2"/>
<dbReference type="InParanoid" id="Q6L277"/>
<dbReference type="OrthoDB" id="15223at2157"/>
<dbReference type="UniPathway" id="UPA00035">
    <property type="reaction ID" value="UER00043"/>
</dbReference>
<dbReference type="Proteomes" id="UP000000438">
    <property type="component" value="Chromosome"/>
</dbReference>
<dbReference type="GO" id="GO:0004425">
    <property type="term" value="F:indole-3-glycerol-phosphate synthase activity"/>
    <property type="evidence" value="ECO:0007669"/>
    <property type="project" value="UniProtKB-UniRule"/>
</dbReference>
<dbReference type="GO" id="GO:0004640">
    <property type="term" value="F:phosphoribosylanthranilate isomerase activity"/>
    <property type="evidence" value="ECO:0007669"/>
    <property type="project" value="TreeGrafter"/>
</dbReference>
<dbReference type="GO" id="GO:0000162">
    <property type="term" value="P:L-tryptophan biosynthetic process"/>
    <property type="evidence" value="ECO:0007669"/>
    <property type="project" value="UniProtKB-UniRule"/>
</dbReference>
<dbReference type="CDD" id="cd00331">
    <property type="entry name" value="IGPS"/>
    <property type="match status" value="1"/>
</dbReference>
<dbReference type="Gene3D" id="3.20.20.70">
    <property type="entry name" value="Aldolase class I"/>
    <property type="match status" value="1"/>
</dbReference>
<dbReference type="HAMAP" id="MF_00134_A">
    <property type="entry name" value="IGPS_A"/>
    <property type="match status" value="1"/>
</dbReference>
<dbReference type="InterPro" id="IPR013785">
    <property type="entry name" value="Aldolase_TIM"/>
</dbReference>
<dbReference type="InterPro" id="IPR045186">
    <property type="entry name" value="Indole-3-glycerol_P_synth"/>
</dbReference>
<dbReference type="InterPro" id="IPR013798">
    <property type="entry name" value="Indole-3-glycerol_P_synth_dom"/>
</dbReference>
<dbReference type="InterPro" id="IPR001468">
    <property type="entry name" value="Indole-3-GlycerolPSynthase_CS"/>
</dbReference>
<dbReference type="InterPro" id="IPR011060">
    <property type="entry name" value="RibuloseP-bd_barrel"/>
</dbReference>
<dbReference type="NCBIfam" id="NF001374">
    <property type="entry name" value="PRK00278.2-1"/>
    <property type="match status" value="1"/>
</dbReference>
<dbReference type="PANTHER" id="PTHR22854:SF2">
    <property type="entry name" value="INDOLE-3-GLYCEROL-PHOSPHATE SYNTHASE"/>
    <property type="match status" value="1"/>
</dbReference>
<dbReference type="PANTHER" id="PTHR22854">
    <property type="entry name" value="TRYPTOPHAN BIOSYNTHESIS PROTEIN"/>
    <property type="match status" value="1"/>
</dbReference>
<dbReference type="Pfam" id="PF00218">
    <property type="entry name" value="IGPS"/>
    <property type="match status" value="1"/>
</dbReference>
<dbReference type="SUPFAM" id="SSF51366">
    <property type="entry name" value="Ribulose-phoshate binding barrel"/>
    <property type="match status" value="1"/>
</dbReference>
<dbReference type="PROSITE" id="PS00614">
    <property type="entry name" value="IGPS"/>
    <property type="match status" value="1"/>
</dbReference>
<gene>
    <name evidence="1" type="primary">trpC</name>
    <name type="ordered locus">PTO0340</name>
</gene>
<comment type="catalytic activity">
    <reaction evidence="1">
        <text>1-(2-carboxyphenylamino)-1-deoxy-D-ribulose 5-phosphate + H(+) = (1S,2R)-1-C-(indol-3-yl)glycerol 3-phosphate + CO2 + H2O</text>
        <dbReference type="Rhea" id="RHEA:23476"/>
        <dbReference type="ChEBI" id="CHEBI:15377"/>
        <dbReference type="ChEBI" id="CHEBI:15378"/>
        <dbReference type="ChEBI" id="CHEBI:16526"/>
        <dbReference type="ChEBI" id="CHEBI:58613"/>
        <dbReference type="ChEBI" id="CHEBI:58866"/>
        <dbReference type="EC" id="4.1.1.48"/>
    </reaction>
</comment>
<comment type="pathway">
    <text evidence="1">Amino-acid biosynthesis; L-tryptophan biosynthesis; L-tryptophan from chorismate: step 4/5.</text>
</comment>
<comment type="similarity">
    <text evidence="1">Belongs to the TrpC family.</text>
</comment>
<name>TRPC_PICTO</name>
<protein>
    <recommendedName>
        <fullName evidence="1">Indole-3-glycerol phosphate synthase</fullName>
        <shortName evidence="1">IGPS</shortName>
        <ecNumber evidence="1">4.1.1.48</ecNumber>
    </recommendedName>
</protein>
<proteinExistence type="inferred from homology"/>
<evidence type="ECO:0000255" key="1">
    <source>
        <dbReference type="HAMAP-Rule" id="MF_00134"/>
    </source>
</evidence>
<sequence length="250" mass="28644">MIVDDIYKNNDKKILIKRNMRSRGILSMRSSIMNFNLNKKIGIIAEFKRRSPSGFVNNENTDIFKYYDVIHNSIAGMSILTEERYFNGNQMDVVSVQRYNIPILIKDFVSNDEMIESSYMIGGDVILLIADFLERDKIEMLNRKIKSLGMEALIEFHDLKAFERITTDENVIIGYNRRNLKTLKIEDESFDAQDLIRSTGLLSVLESGITSENILKMPRYNAMLIGSSILSNDSVLKSAGMIKYDGFGYS</sequence>
<feature type="chain" id="PRO_0000154296" description="Indole-3-glycerol phosphate synthase">
    <location>
        <begin position="1"/>
        <end position="250"/>
    </location>
</feature>